<reference key="1">
    <citation type="journal article" date="2008" name="J. Bacteriol.">
        <title>The complete genome sequence of Thermococcus onnurineus NA1 reveals a mixed heterotrophic and carboxydotrophic metabolism.</title>
        <authorList>
            <person name="Lee H.S."/>
            <person name="Kang S.G."/>
            <person name="Bae S.S."/>
            <person name="Lim J.K."/>
            <person name="Cho Y."/>
            <person name="Kim Y.J."/>
            <person name="Jeon J.H."/>
            <person name="Cha S.-S."/>
            <person name="Kwon K.K."/>
            <person name="Kim H.-T."/>
            <person name="Park C.-J."/>
            <person name="Lee H.-W."/>
            <person name="Kim S.I."/>
            <person name="Chun J."/>
            <person name="Colwell R.R."/>
            <person name="Kim S.-J."/>
            <person name="Lee J.-H."/>
        </authorList>
    </citation>
    <scope>NUCLEOTIDE SEQUENCE [LARGE SCALE GENOMIC DNA]</scope>
    <source>
        <strain>NA1</strain>
    </source>
</reference>
<sequence length="187" mass="21526">MPKRGLFVGRFQPVHNGHIKALEFVFSQVDEVIIGIGSAQASHTLKNPFTTSERMEMLIRALDEAGLEKRYYLIPLPDINFNAIWSTYVQSMVPRFDVVFTGNSLVAQLFRERGYEVIVQPMFRKDILSATEIRKRMVEGEPWEELVPKSVAEFIKEIKGVERIKMLATNLENSEKELQAPIRIPEF</sequence>
<protein>
    <recommendedName>
        <fullName evidence="1">Nicotinamide-nucleotide adenylyltransferase</fullName>
        <ecNumber evidence="1">2.7.7.1</ecNumber>
    </recommendedName>
    <alternativeName>
        <fullName evidence="1">NAD(+) diphosphorylase</fullName>
    </alternativeName>
    <alternativeName>
        <fullName evidence="1">NAD(+) pyrophosphorylase</fullName>
    </alternativeName>
    <alternativeName>
        <fullName evidence="1">NMN adenylyltransferase</fullName>
    </alternativeName>
</protein>
<comment type="catalytic activity">
    <reaction evidence="1">
        <text>beta-nicotinamide D-ribonucleotide + ATP + H(+) = diphosphate + NAD(+)</text>
        <dbReference type="Rhea" id="RHEA:21360"/>
        <dbReference type="ChEBI" id="CHEBI:14649"/>
        <dbReference type="ChEBI" id="CHEBI:15378"/>
        <dbReference type="ChEBI" id="CHEBI:30616"/>
        <dbReference type="ChEBI" id="CHEBI:33019"/>
        <dbReference type="ChEBI" id="CHEBI:57540"/>
        <dbReference type="EC" id="2.7.7.1"/>
    </reaction>
</comment>
<comment type="pathway">
    <text evidence="1">Cofactor biosynthesis; NAD(+) biosynthesis; NAD(+) from nicotinamide D-ribonucleotide: step 1/1.</text>
</comment>
<comment type="subcellular location">
    <subcellularLocation>
        <location evidence="1">Cytoplasm</location>
    </subcellularLocation>
</comment>
<comment type="similarity">
    <text evidence="1">Belongs to the archaeal NMN adenylyltransferase family.</text>
</comment>
<evidence type="ECO:0000255" key="1">
    <source>
        <dbReference type="HAMAP-Rule" id="MF_00243"/>
    </source>
</evidence>
<accession>B6YX39</accession>
<proteinExistence type="inferred from homology"/>
<organism>
    <name type="scientific">Thermococcus onnurineus (strain NA1)</name>
    <dbReference type="NCBI Taxonomy" id="523850"/>
    <lineage>
        <taxon>Archaea</taxon>
        <taxon>Methanobacteriati</taxon>
        <taxon>Methanobacteriota</taxon>
        <taxon>Thermococci</taxon>
        <taxon>Thermococcales</taxon>
        <taxon>Thermococcaceae</taxon>
        <taxon>Thermococcus</taxon>
    </lineage>
</organism>
<name>NADM_THEON</name>
<gene>
    <name type="ordered locus">TON_1164</name>
</gene>
<keyword id="KW-0067">ATP-binding</keyword>
<keyword id="KW-0963">Cytoplasm</keyword>
<keyword id="KW-0520">NAD</keyword>
<keyword id="KW-0547">Nucleotide-binding</keyword>
<keyword id="KW-0548">Nucleotidyltransferase</keyword>
<keyword id="KW-0662">Pyridine nucleotide biosynthesis</keyword>
<keyword id="KW-0808">Transferase</keyword>
<feature type="chain" id="PRO_1000100758" description="Nicotinamide-nucleotide adenylyltransferase">
    <location>
        <begin position="1"/>
        <end position="187"/>
    </location>
</feature>
<dbReference type="EC" id="2.7.7.1" evidence="1"/>
<dbReference type="EMBL" id="CP000855">
    <property type="protein sequence ID" value="ACJ16652.1"/>
    <property type="molecule type" value="Genomic_DNA"/>
</dbReference>
<dbReference type="RefSeq" id="WP_012572124.1">
    <property type="nucleotide sequence ID" value="NC_011529.1"/>
</dbReference>
<dbReference type="SMR" id="B6YX39"/>
<dbReference type="STRING" id="523850.TON_1164"/>
<dbReference type="GeneID" id="7018186"/>
<dbReference type="KEGG" id="ton:TON_1164"/>
<dbReference type="PATRIC" id="fig|523850.10.peg.1171"/>
<dbReference type="eggNOG" id="arCOG00972">
    <property type="taxonomic scope" value="Archaea"/>
</dbReference>
<dbReference type="HOGENOM" id="CLU_108783_0_0_2"/>
<dbReference type="OrthoDB" id="264480at2157"/>
<dbReference type="UniPathway" id="UPA00253">
    <property type="reaction ID" value="UER00600"/>
</dbReference>
<dbReference type="Proteomes" id="UP000002727">
    <property type="component" value="Chromosome"/>
</dbReference>
<dbReference type="GO" id="GO:0005737">
    <property type="term" value="C:cytoplasm"/>
    <property type="evidence" value="ECO:0007669"/>
    <property type="project" value="UniProtKB-SubCell"/>
</dbReference>
<dbReference type="GO" id="GO:0005524">
    <property type="term" value="F:ATP binding"/>
    <property type="evidence" value="ECO:0007669"/>
    <property type="project" value="UniProtKB-KW"/>
</dbReference>
<dbReference type="GO" id="GO:0000309">
    <property type="term" value="F:nicotinamide-nucleotide adenylyltransferase activity"/>
    <property type="evidence" value="ECO:0007669"/>
    <property type="project" value="UniProtKB-UniRule"/>
</dbReference>
<dbReference type="GO" id="GO:0009435">
    <property type="term" value="P:NAD biosynthetic process"/>
    <property type="evidence" value="ECO:0007669"/>
    <property type="project" value="UniProtKB-UniRule"/>
</dbReference>
<dbReference type="CDD" id="cd02166">
    <property type="entry name" value="NMNAT_Archaea"/>
    <property type="match status" value="1"/>
</dbReference>
<dbReference type="Gene3D" id="3.40.50.620">
    <property type="entry name" value="HUPs"/>
    <property type="match status" value="1"/>
</dbReference>
<dbReference type="HAMAP" id="MF_00243">
    <property type="entry name" value="NMN_adenylyltr"/>
    <property type="match status" value="1"/>
</dbReference>
<dbReference type="InterPro" id="IPR004821">
    <property type="entry name" value="Cyt_trans-like"/>
</dbReference>
<dbReference type="InterPro" id="IPR006418">
    <property type="entry name" value="NMN_Atrans_arc"/>
</dbReference>
<dbReference type="InterPro" id="IPR014729">
    <property type="entry name" value="Rossmann-like_a/b/a_fold"/>
</dbReference>
<dbReference type="NCBIfam" id="TIGR01527">
    <property type="entry name" value="arch_NMN_Atrans"/>
    <property type="match status" value="1"/>
</dbReference>
<dbReference type="NCBIfam" id="TIGR00125">
    <property type="entry name" value="cyt_tran_rel"/>
    <property type="match status" value="1"/>
</dbReference>
<dbReference type="NCBIfam" id="NF002243">
    <property type="entry name" value="PRK01153.1"/>
    <property type="match status" value="1"/>
</dbReference>
<dbReference type="PANTHER" id="PTHR21342:SF0">
    <property type="entry name" value="BIFUNCTIONAL NMN ADENYLYLTRANSFERASE_NUDIX HYDROLASE"/>
    <property type="match status" value="1"/>
</dbReference>
<dbReference type="PANTHER" id="PTHR21342">
    <property type="entry name" value="PHOSPHOPANTETHEINE ADENYLYLTRANSFERASE"/>
    <property type="match status" value="1"/>
</dbReference>
<dbReference type="Pfam" id="PF01467">
    <property type="entry name" value="CTP_transf_like"/>
    <property type="match status" value="1"/>
</dbReference>
<dbReference type="SUPFAM" id="SSF52374">
    <property type="entry name" value="Nucleotidylyl transferase"/>
    <property type="match status" value="1"/>
</dbReference>